<name>ACR2A_ACTEQ</name>
<evidence type="ECO:0000250" key="1">
    <source>
        <dbReference type="UniProtKB" id="Q3C256"/>
    </source>
</evidence>
<evidence type="ECO:0000255" key="2"/>
<evidence type="ECO:0000269" key="3">
    <source>
    </source>
</evidence>
<evidence type="ECO:0000303" key="4">
    <source>
    </source>
</evidence>
<evidence type="ECO:0000303" key="5">
    <source>
    </source>
</evidence>
<evidence type="ECO:0000305" key="6"/>
<evidence type="ECO:0000305" key="7">
    <source>
    </source>
</evidence>
<accession>Q3C255</accession>
<reference key="1">
    <citation type="journal article" date="2005" name="Toxicon">
        <title>Novel peptide toxins from acrorhagi, aggressive organs of the sea anemone Actinia equina.</title>
        <authorList>
            <person name="Honma T."/>
            <person name="Minagawa S."/>
            <person name="Nagai H."/>
            <person name="Ishida M."/>
            <person name="Nagashima Y."/>
            <person name="Shiomi K."/>
        </authorList>
    </citation>
    <scope>NUCLEOTIDE SEQUENCE [MRNA]</scope>
    <scope>AMIDATION AT PRO-82</scope>
    <scope>TISSUE SPECIFICITY</scope>
</reference>
<reference key="2">
    <citation type="journal article" date="2012" name="Toxicon">
        <title>Development of a rational nomenclature for naming peptide and protein toxins from sea anemones.</title>
        <authorList>
            <person name="Oliveira J.S."/>
            <person name="Fuentes-Silva D."/>
            <person name="King G.F."/>
        </authorList>
    </citation>
    <scope>NOMENCLATURE</scope>
</reference>
<proteinExistence type="evidence at protein level"/>
<feature type="signal peptide" evidence="2">
    <location>
        <begin position="1"/>
        <end position="20"/>
    </location>
</feature>
<feature type="propeptide" id="PRO_0000228115" evidence="1">
    <location>
        <begin position="21"/>
        <end position="36"/>
    </location>
</feature>
<feature type="chain" id="PRO_0000228116" description="U-actitoxin-Aeq6b">
    <location>
        <begin position="39"/>
        <end position="82"/>
    </location>
</feature>
<feature type="modified residue" description="Proline amide" evidence="7">
    <location>
        <position position="82"/>
    </location>
</feature>
<organism>
    <name type="scientific">Actinia equina</name>
    <name type="common">Beadlet anemone</name>
    <dbReference type="NCBI Taxonomy" id="6106"/>
    <lineage>
        <taxon>Eukaryota</taxon>
        <taxon>Metazoa</taxon>
        <taxon>Cnidaria</taxon>
        <taxon>Anthozoa</taxon>
        <taxon>Hexacorallia</taxon>
        <taxon>Actiniaria</taxon>
        <taxon>Actiniidae</taxon>
        <taxon>Actinia</taxon>
    </lineage>
</organism>
<dbReference type="EMBL" id="AB212069">
    <property type="protein sequence ID" value="BAE46984.1"/>
    <property type="molecule type" value="mRNA"/>
</dbReference>
<dbReference type="GO" id="GO:0005576">
    <property type="term" value="C:extracellular region"/>
    <property type="evidence" value="ECO:0007669"/>
    <property type="project" value="UniProtKB-SubCell"/>
</dbReference>
<dbReference type="GO" id="GO:0042151">
    <property type="term" value="C:nematocyst"/>
    <property type="evidence" value="ECO:0007669"/>
    <property type="project" value="UniProtKB-SubCell"/>
</dbReference>
<dbReference type="GO" id="GO:0090729">
    <property type="term" value="F:toxin activity"/>
    <property type="evidence" value="ECO:0007669"/>
    <property type="project" value="UniProtKB-KW"/>
</dbReference>
<sequence length="83" mass="9096">MIYKAVFVCLVLVLLGDVFCSPRNSGGGTLNDNPFEKRTDCRFVGAKCTKANNPCVGKVCNGYQLYCPVDDDHCIMKLTFIPG</sequence>
<protein>
    <recommendedName>
        <fullName evidence="5">U-actitoxin-Aeq6b</fullName>
        <shortName evidence="5">U-AITX-Aeq6b</shortName>
    </recommendedName>
    <alternativeName>
        <fullName evidence="4">Acrorhagin IIa</fullName>
    </alternativeName>
    <alternativeName>
        <fullName evidence="6">Acrorhagin-2a</fullName>
    </alternativeName>
</protein>
<keyword id="KW-0027">Amidation</keyword>
<keyword id="KW-0165">Cleavage on pair of basic residues</keyword>
<keyword id="KW-1015">Disulfide bond</keyword>
<keyword id="KW-0166">Nematocyst</keyword>
<keyword id="KW-0964">Secreted</keyword>
<keyword id="KW-0732">Signal</keyword>
<keyword id="KW-0800">Toxin</keyword>
<comment type="function">
    <text evidence="1">Toxin.</text>
</comment>
<comment type="subcellular location">
    <subcellularLocation>
        <location evidence="6">Secreted</location>
    </subcellularLocation>
    <subcellularLocation>
        <location evidence="6">Nematocyst</location>
    </subcellularLocation>
</comment>
<comment type="tissue specificity">
    <text evidence="3">Expressed by acrorhagi.</text>
</comment>
<comment type="PTM">
    <text evidence="6">Contains 3 disulfide bonds.</text>
</comment>